<feature type="chain" id="PRO_0000221792" description="Fiber protein">
    <location>
        <begin position="1"/>
        <end position="362"/>
    </location>
</feature>
<organismHost>
    <name type="scientific">Homo sapiens</name>
    <name type="common">Human</name>
    <dbReference type="NCBI Taxonomy" id="9606"/>
</organismHost>
<keyword id="KW-0167">Capsid protein</keyword>
<keyword id="KW-1048">Host nucleus</keyword>
<keyword id="KW-0945">Host-virus interaction</keyword>
<keyword id="KW-0426">Late protein</keyword>
<keyword id="KW-1233">Viral attachment to host adhesion receptor</keyword>
<keyword id="KW-1161">Viral attachment to host cell</keyword>
<keyword id="KW-0946">Virion</keyword>
<keyword id="KW-1160">Virus entry into host cell</keyword>
<reference key="1">
    <citation type="journal article" date="1995" name="Virology">
        <title>Characterization of adenovirus subgenus D fiber genes.</title>
        <authorList>
            <person name="Pring-Akerblom P."/>
            <person name="Adrian T."/>
        </authorList>
    </citation>
    <scope>NUCLEOTIDE SEQUENCE [GENOMIC DNA]</scope>
    <source>
        <strain>Isolate ATCC VR-1086 / Hicks / V-209-003-014</strain>
    </source>
</reference>
<reference key="2">
    <citation type="journal article" date="2005" name="J. Virol.">
        <title>Adenovirus receptors.</title>
        <authorList>
            <person name="Zhang Y."/>
            <person name="Bergelson J.M."/>
        </authorList>
    </citation>
    <scope>REVIEW</scope>
</reference>
<proteinExistence type="evidence at transcript level"/>
<evidence type="ECO:0000250" key="1"/>
<evidence type="ECO:0000305" key="2"/>
<protein>
    <recommendedName>
        <fullName>Fiber protein</fullName>
        <shortName>SPIKE</shortName>
    </recommendedName>
    <alternativeName>
        <fullName>Protein IV</fullName>
    </alternativeName>
</protein>
<gene>
    <name type="ORF">L5</name>
</gene>
<organism>
    <name type="scientific">Human adenovirus D serotype 9</name>
    <name type="common">HAdV-9</name>
    <name type="synonym">Human adenovirus 9</name>
    <dbReference type="NCBI Taxonomy" id="10527"/>
    <lineage>
        <taxon>Viruses</taxon>
        <taxon>Varidnaviria</taxon>
        <taxon>Bamfordvirae</taxon>
        <taxon>Preplasmiviricota</taxon>
        <taxon>Tectiliviricetes</taxon>
        <taxon>Rowavirales</taxon>
        <taxon>Adenoviridae</taxon>
        <taxon>Mastadenovirus</taxon>
        <taxon>Human mastadenovirus D</taxon>
    </lineage>
</organism>
<name>SPIKE_ADE09</name>
<accession>P68982</accession>
<accession>P36846</accession>
<sequence length="362" mass="39420">MSKRLRVEDDFNPVYPYGYARNQNIPFLTPPFVSSDGFQNFPPGVLSLKLADPIAIVNGNVSLKVGGGLTLQDGTGKLTVNADPPLQLTNNKLGIALDAPFDVIDNKLTLLAGHGLSIITKETSTLPGLRNTLVVLTGKGIGTESTDNGGTVCVRVGEGGGLSFNNDGDLVAFNKKEDKRTLWTTPDTSPNCKIDQDKDSKLTLVLTKCGSQILANVSLIVVDGKYKIINNNTQPALKGFTIKLLFDENGVLMESSNLGKSYWNFRNENSIMSTAYEKAIGFMPNLVAYPKPTAGSKKYARDIVYGNIYLGGKPDQPVTIKTTFNQETGCEYSITFDFSWAKTYVNVEFETTSFTFSYIAQE</sequence>
<comment type="function">
    <text evidence="1">Forms spikes that protrude from each vertex of the icosahedral capsid. Interacts with host receptor CXCAR to provide virion initial attachment to target cell. Fiber proteins are shed during virus entry, when virus is still at the cell surface (By similarity).</text>
</comment>
<comment type="subunit">
    <text evidence="1">Homotrimer. Interacts with host receptor CXCAR. Interacts (via N-terminal tail region) with pentons (By similarity).</text>
</comment>
<comment type="subcellular location">
    <subcellularLocation>
        <location evidence="1">Virion</location>
    </subcellularLocation>
    <subcellularLocation>
        <location evidence="1">Host nucleus</location>
    </subcellularLocation>
    <text evidence="1">Anchored to the pentons, protrudes from the virion surface.</text>
</comment>
<comment type="induction">
    <text>Expressed in the late phase of the viral replicative cycle.</text>
</comment>
<comment type="domain">
    <text evidence="1">The tail region anchors the fiber to penton base capsomers, whereas the shaft, built from several repeated motifs, allows the knob to protrude from the virion.</text>
</comment>
<comment type="miscellaneous">
    <text evidence="1">All late proteins expressed from the major late promoter are produced by alternative splicing and alternative polyadenylation of the same gene giving rise to non-overlapping ORFs. A leader sequence is present in the N-terminus of all these mRNAs and is recognized by the viral shutoff protein to provide expression although conventional translation via ribosome scanning from the cap has been shut off in the host cell (By similarity).</text>
</comment>
<comment type="similarity">
    <text evidence="2">Belongs to the adenoviridae fiber family.</text>
</comment>
<dbReference type="EMBL" id="X74659">
    <property type="protein sequence ID" value="CAA52723.1"/>
    <property type="molecule type" value="Genomic_DNA"/>
</dbReference>
<dbReference type="PIR" id="S37220">
    <property type="entry name" value="S37220"/>
</dbReference>
<dbReference type="SMR" id="P68982"/>
<dbReference type="GO" id="GO:0042025">
    <property type="term" value="C:host cell nucleus"/>
    <property type="evidence" value="ECO:0007669"/>
    <property type="project" value="UniProtKB-SubCell"/>
</dbReference>
<dbReference type="GO" id="GO:0019028">
    <property type="term" value="C:viral capsid"/>
    <property type="evidence" value="ECO:0007669"/>
    <property type="project" value="UniProtKB-KW"/>
</dbReference>
<dbReference type="GO" id="GO:0098671">
    <property type="term" value="P:adhesion receptor-mediated virion attachment to host cell"/>
    <property type="evidence" value="ECO:0007669"/>
    <property type="project" value="UniProtKB-KW"/>
</dbReference>
<dbReference type="GO" id="GO:0007155">
    <property type="term" value="P:cell adhesion"/>
    <property type="evidence" value="ECO:0007669"/>
    <property type="project" value="InterPro"/>
</dbReference>
<dbReference type="GO" id="GO:0046718">
    <property type="term" value="P:symbiont entry into host cell"/>
    <property type="evidence" value="ECO:0007669"/>
    <property type="project" value="UniProtKB-KW"/>
</dbReference>
<dbReference type="Gene3D" id="6.20.10.20">
    <property type="match status" value="1"/>
</dbReference>
<dbReference type="Gene3D" id="2.60.90.10">
    <property type="entry name" value="Adenovirus pIV-related, attachment domain"/>
    <property type="match status" value="1"/>
</dbReference>
<dbReference type="InterPro" id="IPR000931">
    <property type="entry name" value="Adeno_fibre"/>
</dbReference>
<dbReference type="InterPro" id="IPR000978">
    <property type="entry name" value="Adeno_fibre_knob"/>
</dbReference>
<dbReference type="InterPro" id="IPR008982">
    <property type="entry name" value="Adenovirus_pIV-like_att"/>
</dbReference>
<dbReference type="InterPro" id="IPR009013">
    <property type="entry name" value="Attachment_protein_shaft_sf"/>
</dbReference>
<dbReference type="Pfam" id="PF00541">
    <property type="entry name" value="Adeno_knob"/>
    <property type="match status" value="1"/>
</dbReference>
<dbReference type="PRINTS" id="PR00307">
    <property type="entry name" value="ADENOVSFIBRE"/>
</dbReference>
<dbReference type="SUPFAM" id="SSF51225">
    <property type="entry name" value="Fibre shaft of virus attachment proteins"/>
    <property type="match status" value="2"/>
</dbReference>
<dbReference type="SUPFAM" id="SSF49835">
    <property type="entry name" value="Virus attachment protein globular domain"/>
    <property type="match status" value="1"/>
</dbReference>